<feature type="chain" id="PRO_0000362400" description="ATP synthase subunit a">
    <location>
        <begin position="1"/>
        <end position="290"/>
    </location>
</feature>
<feature type="transmembrane region" description="Helical" evidence="1">
    <location>
        <begin position="54"/>
        <end position="74"/>
    </location>
</feature>
<feature type="transmembrane region" description="Helical" evidence="1">
    <location>
        <begin position="115"/>
        <end position="135"/>
    </location>
</feature>
<feature type="transmembrane region" description="Helical" evidence="1">
    <location>
        <begin position="136"/>
        <end position="156"/>
    </location>
</feature>
<feature type="transmembrane region" description="Helical" evidence="1">
    <location>
        <begin position="164"/>
        <end position="184"/>
    </location>
</feature>
<feature type="transmembrane region" description="Helical" evidence="1">
    <location>
        <begin position="201"/>
        <end position="221"/>
    </location>
</feature>
<feature type="transmembrane region" description="Helical" evidence="1">
    <location>
        <begin position="233"/>
        <end position="253"/>
    </location>
</feature>
<feature type="transmembrane region" description="Helical" evidence="1">
    <location>
        <begin position="254"/>
        <end position="274"/>
    </location>
</feature>
<organism>
    <name type="scientific">Stutzerimonas stutzeri (strain A1501)</name>
    <name type="common">Pseudomonas stutzeri</name>
    <dbReference type="NCBI Taxonomy" id="379731"/>
    <lineage>
        <taxon>Bacteria</taxon>
        <taxon>Pseudomonadati</taxon>
        <taxon>Pseudomonadota</taxon>
        <taxon>Gammaproteobacteria</taxon>
        <taxon>Pseudomonadales</taxon>
        <taxon>Pseudomonadaceae</taxon>
        <taxon>Stutzerimonas</taxon>
    </lineage>
</organism>
<gene>
    <name evidence="1" type="primary">atpB</name>
    <name type="ordered locus">PST_4197</name>
</gene>
<protein>
    <recommendedName>
        <fullName evidence="1">ATP synthase subunit a</fullName>
    </recommendedName>
    <alternativeName>
        <fullName evidence="1">ATP synthase F0 sector subunit a</fullName>
    </alternativeName>
    <alternativeName>
        <fullName evidence="1">F-ATPase subunit 6</fullName>
    </alternativeName>
</protein>
<dbReference type="EMBL" id="CP000304">
    <property type="protein sequence ID" value="ABP81819.1"/>
    <property type="molecule type" value="Genomic_DNA"/>
</dbReference>
<dbReference type="RefSeq" id="WP_011915196.1">
    <property type="nucleotide sequence ID" value="NC_009434.1"/>
</dbReference>
<dbReference type="SMR" id="A4VS68"/>
<dbReference type="GeneID" id="66823491"/>
<dbReference type="KEGG" id="psa:PST_4197"/>
<dbReference type="eggNOG" id="COG0356">
    <property type="taxonomic scope" value="Bacteria"/>
</dbReference>
<dbReference type="HOGENOM" id="CLU_041018_1_0_6"/>
<dbReference type="Proteomes" id="UP000000233">
    <property type="component" value="Chromosome"/>
</dbReference>
<dbReference type="GO" id="GO:0005886">
    <property type="term" value="C:plasma membrane"/>
    <property type="evidence" value="ECO:0007669"/>
    <property type="project" value="UniProtKB-SubCell"/>
</dbReference>
<dbReference type="GO" id="GO:0045259">
    <property type="term" value="C:proton-transporting ATP synthase complex"/>
    <property type="evidence" value="ECO:0007669"/>
    <property type="project" value="UniProtKB-KW"/>
</dbReference>
<dbReference type="GO" id="GO:0046933">
    <property type="term" value="F:proton-transporting ATP synthase activity, rotational mechanism"/>
    <property type="evidence" value="ECO:0007669"/>
    <property type="project" value="UniProtKB-UniRule"/>
</dbReference>
<dbReference type="GO" id="GO:0042777">
    <property type="term" value="P:proton motive force-driven plasma membrane ATP synthesis"/>
    <property type="evidence" value="ECO:0007669"/>
    <property type="project" value="TreeGrafter"/>
</dbReference>
<dbReference type="CDD" id="cd00310">
    <property type="entry name" value="ATP-synt_Fo_a_6"/>
    <property type="match status" value="1"/>
</dbReference>
<dbReference type="FunFam" id="1.20.120.220:FF:000002">
    <property type="entry name" value="ATP synthase subunit a"/>
    <property type="match status" value="1"/>
</dbReference>
<dbReference type="Gene3D" id="1.20.120.220">
    <property type="entry name" value="ATP synthase, F0 complex, subunit A"/>
    <property type="match status" value="1"/>
</dbReference>
<dbReference type="HAMAP" id="MF_01393">
    <property type="entry name" value="ATP_synth_a_bact"/>
    <property type="match status" value="1"/>
</dbReference>
<dbReference type="InterPro" id="IPR045082">
    <property type="entry name" value="ATP_syn_F0_a_bact/chloroplast"/>
</dbReference>
<dbReference type="InterPro" id="IPR000568">
    <property type="entry name" value="ATP_synth_F0_asu"/>
</dbReference>
<dbReference type="InterPro" id="IPR023011">
    <property type="entry name" value="ATP_synth_F0_asu_AS"/>
</dbReference>
<dbReference type="InterPro" id="IPR035908">
    <property type="entry name" value="F0_ATP_A_sf"/>
</dbReference>
<dbReference type="NCBIfam" id="TIGR01131">
    <property type="entry name" value="ATP_synt_6_or_A"/>
    <property type="match status" value="1"/>
</dbReference>
<dbReference type="NCBIfam" id="NF004477">
    <property type="entry name" value="PRK05815.1-1"/>
    <property type="match status" value="1"/>
</dbReference>
<dbReference type="PANTHER" id="PTHR42823">
    <property type="entry name" value="ATP SYNTHASE SUBUNIT A, CHLOROPLASTIC"/>
    <property type="match status" value="1"/>
</dbReference>
<dbReference type="PANTHER" id="PTHR42823:SF3">
    <property type="entry name" value="ATP SYNTHASE SUBUNIT A, CHLOROPLASTIC"/>
    <property type="match status" value="1"/>
</dbReference>
<dbReference type="Pfam" id="PF00119">
    <property type="entry name" value="ATP-synt_A"/>
    <property type="match status" value="1"/>
</dbReference>
<dbReference type="PRINTS" id="PR00123">
    <property type="entry name" value="ATPASEA"/>
</dbReference>
<dbReference type="SUPFAM" id="SSF81336">
    <property type="entry name" value="F1F0 ATP synthase subunit A"/>
    <property type="match status" value="1"/>
</dbReference>
<dbReference type="PROSITE" id="PS00449">
    <property type="entry name" value="ATPASE_A"/>
    <property type="match status" value="1"/>
</dbReference>
<accession>A4VS68</accession>
<evidence type="ECO:0000255" key="1">
    <source>
        <dbReference type="HAMAP-Rule" id="MF_01393"/>
    </source>
</evidence>
<name>ATP6_STUS1</name>
<comment type="function">
    <text evidence="1">Key component of the proton channel; it plays a direct role in the translocation of protons across the membrane.</text>
</comment>
<comment type="subunit">
    <text evidence="1">F-type ATPases have 2 components, CF(1) - the catalytic core - and CF(0) - the membrane proton channel. CF(1) has five subunits: alpha(3), beta(3), gamma(1), delta(1), epsilon(1). CF(0) has three main subunits: a(1), b(2) and c(9-12). The alpha and beta chains form an alternating ring which encloses part of the gamma chain. CF(1) is attached to CF(0) by a central stalk formed by the gamma and epsilon chains, while a peripheral stalk is formed by the delta and b chains.</text>
</comment>
<comment type="subcellular location">
    <subcellularLocation>
        <location evidence="1">Cell inner membrane</location>
        <topology evidence="1">Multi-pass membrane protein</topology>
    </subcellularLocation>
</comment>
<comment type="similarity">
    <text evidence="1">Belongs to the ATPase A chain family.</text>
</comment>
<keyword id="KW-0066">ATP synthesis</keyword>
<keyword id="KW-0997">Cell inner membrane</keyword>
<keyword id="KW-1003">Cell membrane</keyword>
<keyword id="KW-0138">CF(0)</keyword>
<keyword id="KW-0375">Hydrogen ion transport</keyword>
<keyword id="KW-0406">Ion transport</keyword>
<keyword id="KW-0472">Membrane</keyword>
<keyword id="KW-1185">Reference proteome</keyword>
<keyword id="KW-0812">Transmembrane</keyword>
<keyword id="KW-1133">Transmembrane helix</keyword>
<keyword id="KW-0813">Transport</keyword>
<proteinExistence type="inferred from homology"/>
<sequence length="290" mass="32064">MASTPAEYIQHHLQNLTYGKLPAGYERADGSILDQATWTIAQTGAEARDMGFMAVHLDTLGWSLLMGAIFILLFRSAAKAATAGVPGKLQNLVEMCVEFVEGVVKDTFHGRNPLIAPLALTIFVWVFLMNSLKWIPVDYIPGIAHLLGLPAFKIVPTADPNGTFGLSLGVFILILFYSFKVKGFGGFTKELAFTPFNHWSLVPFNLFLEILGLLTKPLSLALRLFGNMYAGEVVFILIALLPFYVQWTLNVPWAIFHILVIPLQAFIFMVLTVVYLSSAHEDHGHAELTP</sequence>
<reference key="1">
    <citation type="journal article" date="2008" name="Proc. Natl. Acad. Sci. U.S.A.">
        <title>Nitrogen fixation island and rhizosphere competence traits in the genome of root-associated Pseudomonas stutzeri A1501.</title>
        <authorList>
            <person name="Yan Y."/>
            <person name="Yang J."/>
            <person name="Dou Y."/>
            <person name="Chen M."/>
            <person name="Ping S."/>
            <person name="Peng J."/>
            <person name="Lu W."/>
            <person name="Zhang W."/>
            <person name="Yao Z."/>
            <person name="Li H."/>
            <person name="Liu W."/>
            <person name="He S."/>
            <person name="Geng L."/>
            <person name="Zhang X."/>
            <person name="Yang F."/>
            <person name="Yu H."/>
            <person name="Zhan Y."/>
            <person name="Li D."/>
            <person name="Lin Z."/>
            <person name="Wang Y."/>
            <person name="Elmerich C."/>
            <person name="Lin M."/>
            <person name="Jin Q."/>
        </authorList>
    </citation>
    <scope>NUCLEOTIDE SEQUENCE [LARGE SCALE GENOMIC DNA]</scope>
    <source>
        <strain>A1501</strain>
    </source>
</reference>